<gene>
    <name type="primary">DBP3</name>
    <name type="ordered locus">CAALFM_C110030WA</name>
    <name type="ORF">CaO19.12334</name>
    <name type="ORF">CaO19.4870</name>
</gene>
<sequence length="564" mass="63127">MSFSSGKFLFVFLFFFFFKNTSCSNQRKYITKQQTMSKDKKEHKDKKRKHDNEDVEIADSKKQRKLEKQEKKDKKDKKDKKEKKEKKEKKHKKEKKHKDSESSPVEPAANDSSSSTNYTQSSKLSSVSQSDIDKFLSDNEITVEDPSSSSLRPILSFDQVQLTSAITSKLSKFDKPTPIQSVSWPFLLSGKDVIGVAETGSGKTFAFGVPAINNIITTGNTKTLSVLCISPTRELALQIYDNLIELTADSGVNCVAVYGGVSKDDQIRKIKTANVVVATPGRLVDLINDGAINLGKVNYLVLDEADRMLEKGFEEDIKTIISNTSNSERQTLMFTATWPKEVRELANNFMNSPVKVTVGDRDELSANKRITQVVEVINKFDKEKKLIQLLRKYNANESSDNKILIFALYKKEASRIENFLKRNRFSVAAIHGDLSQQQRTAALSAFKSGQSNLLLATDVAARGLDIPNVKVVINLTFPLTIEDYVHRIGRTGRAGAKGTAHTLFTEDEKHLSGALCNILRGANQPVPEELLKFGGHTKKKAHSVYGAFYKDVDMTKTAKKIKFD</sequence>
<reference key="1">
    <citation type="journal article" date="2004" name="Proc. Natl. Acad. Sci. U.S.A.">
        <title>The diploid genome sequence of Candida albicans.</title>
        <authorList>
            <person name="Jones T."/>
            <person name="Federspiel N.A."/>
            <person name="Chibana H."/>
            <person name="Dungan J."/>
            <person name="Kalman S."/>
            <person name="Magee B.B."/>
            <person name="Newport G."/>
            <person name="Thorstenson Y.R."/>
            <person name="Agabian N."/>
            <person name="Magee P.T."/>
            <person name="Davis R.W."/>
            <person name="Scherer S."/>
        </authorList>
    </citation>
    <scope>NUCLEOTIDE SEQUENCE [LARGE SCALE GENOMIC DNA]</scope>
    <source>
        <strain>SC5314 / ATCC MYA-2876</strain>
    </source>
</reference>
<reference key="2">
    <citation type="journal article" date="2007" name="Genome Biol.">
        <title>Assembly of the Candida albicans genome into sixteen supercontigs aligned on the eight chromosomes.</title>
        <authorList>
            <person name="van het Hoog M."/>
            <person name="Rast T.J."/>
            <person name="Martchenko M."/>
            <person name="Grindle S."/>
            <person name="Dignard D."/>
            <person name="Hogues H."/>
            <person name="Cuomo C."/>
            <person name="Berriman M."/>
            <person name="Scherer S."/>
            <person name="Magee B.B."/>
            <person name="Whiteway M."/>
            <person name="Chibana H."/>
            <person name="Nantel A."/>
            <person name="Magee P.T."/>
        </authorList>
    </citation>
    <scope>GENOME REANNOTATION</scope>
    <source>
        <strain>SC5314 / ATCC MYA-2876</strain>
    </source>
</reference>
<reference key="3">
    <citation type="journal article" date="2013" name="Genome Biol.">
        <title>Assembly of a phased diploid Candida albicans genome facilitates allele-specific measurements and provides a simple model for repeat and indel structure.</title>
        <authorList>
            <person name="Muzzey D."/>
            <person name="Schwartz K."/>
            <person name="Weissman J.S."/>
            <person name="Sherlock G."/>
        </authorList>
    </citation>
    <scope>NUCLEOTIDE SEQUENCE [LARGE SCALE GENOMIC DNA]</scope>
    <scope>GENOME REANNOTATION</scope>
    <source>
        <strain>SC5314 / ATCC MYA-2876</strain>
    </source>
</reference>
<dbReference type="EC" id="3.6.4.13"/>
<dbReference type="EMBL" id="CP017623">
    <property type="protein sequence ID" value="AOW26634.1"/>
    <property type="molecule type" value="Genomic_DNA"/>
</dbReference>
<dbReference type="RefSeq" id="XP_723554.1">
    <property type="nucleotide sequence ID" value="XM_718461.1"/>
</dbReference>
<dbReference type="SMR" id="Q5APT8"/>
<dbReference type="BioGRID" id="1217962">
    <property type="interactions" value="1"/>
</dbReference>
<dbReference type="FunCoup" id="Q5APT8">
    <property type="interactions" value="433"/>
</dbReference>
<dbReference type="STRING" id="237561.Q5APT8"/>
<dbReference type="EnsemblFungi" id="C1_10030W_A-T">
    <property type="protein sequence ID" value="C1_10030W_A-T-p1"/>
    <property type="gene ID" value="C1_10030W_A"/>
</dbReference>
<dbReference type="GeneID" id="3634868"/>
<dbReference type="KEGG" id="cal:CAALFM_C110030WA"/>
<dbReference type="CGD" id="CAL0000185988">
    <property type="gene designation" value="DBP3"/>
</dbReference>
<dbReference type="VEuPathDB" id="FungiDB:C1_10030W_A"/>
<dbReference type="eggNOG" id="KOG0331">
    <property type="taxonomic scope" value="Eukaryota"/>
</dbReference>
<dbReference type="HOGENOM" id="CLU_003041_1_5_1"/>
<dbReference type="InParanoid" id="Q5APT8"/>
<dbReference type="OrthoDB" id="196131at2759"/>
<dbReference type="PRO" id="PR:Q5APT8"/>
<dbReference type="Proteomes" id="UP000000559">
    <property type="component" value="Chromosome 1"/>
</dbReference>
<dbReference type="GO" id="GO:0005730">
    <property type="term" value="C:nucleolus"/>
    <property type="evidence" value="ECO:0000318"/>
    <property type="project" value="GO_Central"/>
</dbReference>
<dbReference type="GO" id="GO:0030687">
    <property type="term" value="C:preribosome, large subunit precursor"/>
    <property type="evidence" value="ECO:0007669"/>
    <property type="project" value="EnsemblFungi"/>
</dbReference>
<dbReference type="GO" id="GO:0005524">
    <property type="term" value="F:ATP binding"/>
    <property type="evidence" value="ECO:0007669"/>
    <property type="project" value="UniProtKB-KW"/>
</dbReference>
<dbReference type="GO" id="GO:0016887">
    <property type="term" value="F:ATP hydrolysis activity"/>
    <property type="evidence" value="ECO:0007669"/>
    <property type="project" value="RHEA"/>
</dbReference>
<dbReference type="GO" id="GO:0003729">
    <property type="term" value="F:mRNA binding"/>
    <property type="evidence" value="ECO:0000318"/>
    <property type="project" value="GO_Central"/>
</dbReference>
<dbReference type="GO" id="GO:0003724">
    <property type="term" value="F:RNA helicase activity"/>
    <property type="evidence" value="ECO:0000318"/>
    <property type="project" value="GO_Central"/>
</dbReference>
<dbReference type="GO" id="GO:0000464">
    <property type="term" value="P:endonucleolytic cleavage in ITS1 upstream of 5.8S rRNA from tricistronic rRNA transcript (SSU-rRNA, 5.8S rRNA, LSU-rRNA)"/>
    <property type="evidence" value="ECO:0007669"/>
    <property type="project" value="EnsemblFungi"/>
</dbReference>
<dbReference type="GO" id="GO:0006364">
    <property type="term" value="P:rRNA processing"/>
    <property type="evidence" value="ECO:0000318"/>
    <property type="project" value="GO_Central"/>
</dbReference>
<dbReference type="CDD" id="cd00268">
    <property type="entry name" value="DEADc"/>
    <property type="match status" value="1"/>
</dbReference>
<dbReference type="CDD" id="cd18787">
    <property type="entry name" value="SF2_C_DEAD"/>
    <property type="match status" value="1"/>
</dbReference>
<dbReference type="FunFam" id="3.40.50.300:FF:000008">
    <property type="entry name" value="ATP-dependent RNA helicase RhlB"/>
    <property type="match status" value="1"/>
</dbReference>
<dbReference type="Gene3D" id="3.40.50.300">
    <property type="entry name" value="P-loop containing nucleotide triphosphate hydrolases"/>
    <property type="match status" value="2"/>
</dbReference>
<dbReference type="InterPro" id="IPR011545">
    <property type="entry name" value="DEAD/DEAH_box_helicase_dom"/>
</dbReference>
<dbReference type="InterPro" id="IPR014001">
    <property type="entry name" value="Helicase_ATP-bd"/>
</dbReference>
<dbReference type="InterPro" id="IPR001650">
    <property type="entry name" value="Helicase_C-like"/>
</dbReference>
<dbReference type="InterPro" id="IPR027417">
    <property type="entry name" value="P-loop_NTPase"/>
</dbReference>
<dbReference type="InterPro" id="IPR000629">
    <property type="entry name" value="RNA-helicase_DEAD-box_CS"/>
</dbReference>
<dbReference type="PANTHER" id="PTHR47958">
    <property type="entry name" value="ATP-DEPENDENT RNA HELICASE DBP3"/>
    <property type="match status" value="1"/>
</dbReference>
<dbReference type="Pfam" id="PF00270">
    <property type="entry name" value="DEAD"/>
    <property type="match status" value="1"/>
</dbReference>
<dbReference type="Pfam" id="PF00271">
    <property type="entry name" value="Helicase_C"/>
    <property type="match status" value="1"/>
</dbReference>
<dbReference type="SMART" id="SM00487">
    <property type="entry name" value="DEXDc"/>
    <property type="match status" value="1"/>
</dbReference>
<dbReference type="SMART" id="SM00490">
    <property type="entry name" value="HELICc"/>
    <property type="match status" value="1"/>
</dbReference>
<dbReference type="SUPFAM" id="SSF52540">
    <property type="entry name" value="P-loop containing nucleoside triphosphate hydrolases"/>
    <property type="match status" value="2"/>
</dbReference>
<dbReference type="PROSITE" id="PS00039">
    <property type="entry name" value="DEAD_ATP_HELICASE"/>
    <property type="match status" value="1"/>
</dbReference>
<dbReference type="PROSITE" id="PS51192">
    <property type="entry name" value="HELICASE_ATP_BIND_1"/>
    <property type="match status" value="1"/>
</dbReference>
<dbReference type="PROSITE" id="PS51194">
    <property type="entry name" value="HELICASE_CTER"/>
    <property type="match status" value="1"/>
</dbReference>
<dbReference type="PROSITE" id="PS51195">
    <property type="entry name" value="Q_MOTIF"/>
    <property type="match status" value="1"/>
</dbReference>
<name>DBP3_CANAL</name>
<accession>Q5APT8</accession>
<accession>A0A1D8PER1</accession>
<accession>Q5AP94</accession>
<evidence type="ECO:0000250" key="1"/>
<evidence type="ECO:0000255" key="2">
    <source>
        <dbReference type="PROSITE-ProRule" id="PRU00541"/>
    </source>
</evidence>
<evidence type="ECO:0000255" key="3">
    <source>
        <dbReference type="PROSITE-ProRule" id="PRU00542"/>
    </source>
</evidence>
<evidence type="ECO:0000256" key="4">
    <source>
        <dbReference type="SAM" id="MobiDB-lite"/>
    </source>
</evidence>
<evidence type="ECO:0000305" key="5"/>
<organism>
    <name type="scientific">Candida albicans (strain SC5314 / ATCC MYA-2876)</name>
    <name type="common">Yeast</name>
    <dbReference type="NCBI Taxonomy" id="237561"/>
    <lineage>
        <taxon>Eukaryota</taxon>
        <taxon>Fungi</taxon>
        <taxon>Dikarya</taxon>
        <taxon>Ascomycota</taxon>
        <taxon>Saccharomycotina</taxon>
        <taxon>Pichiomycetes</taxon>
        <taxon>Debaryomycetaceae</taxon>
        <taxon>Candida/Lodderomyces clade</taxon>
        <taxon>Candida</taxon>
    </lineage>
</organism>
<protein>
    <recommendedName>
        <fullName>ATP-dependent RNA helicase DBP3</fullName>
        <ecNumber>3.6.4.13</ecNumber>
    </recommendedName>
</protein>
<proteinExistence type="inferred from homology"/>
<feature type="chain" id="PRO_0000232174" description="ATP-dependent RNA helicase DBP3">
    <location>
        <begin position="1"/>
        <end position="564"/>
    </location>
</feature>
<feature type="domain" description="Helicase ATP-binding" evidence="2">
    <location>
        <begin position="184"/>
        <end position="356"/>
    </location>
</feature>
<feature type="domain" description="Helicase C-terminal" evidence="3">
    <location>
        <begin position="385"/>
        <end position="534"/>
    </location>
</feature>
<feature type="region of interest" description="Disordered" evidence="4">
    <location>
        <begin position="31"/>
        <end position="125"/>
    </location>
</feature>
<feature type="short sequence motif" description="Q motif">
    <location>
        <begin position="155"/>
        <end position="181"/>
    </location>
</feature>
<feature type="short sequence motif" description="DEAD box">
    <location>
        <begin position="303"/>
        <end position="306"/>
    </location>
</feature>
<feature type="compositionally biased region" description="Basic and acidic residues" evidence="4">
    <location>
        <begin position="58"/>
        <end position="73"/>
    </location>
</feature>
<feature type="compositionally biased region" description="Basic residues" evidence="4">
    <location>
        <begin position="74"/>
        <end position="96"/>
    </location>
</feature>
<feature type="compositionally biased region" description="Low complexity" evidence="4">
    <location>
        <begin position="112"/>
        <end position="125"/>
    </location>
</feature>
<feature type="binding site" evidence="2">
    <location>
        <begin position="197"/>
        <end position="204"/>
    </location>
    <ligand>
        <name>ATP</name>
        <dbReference type="ChEBI" id="CHEBI:30616"/>
    </ligand>
</feature>
<keyword id="KW-0067">ATP-binding</keyword>
<keyword id="KW-0347">Helicase</keyword>
<keyword id="KW-0378">Hydrolase</keyword>
<keyword id="KW-0547">Nucleotide-binding</keyword>
<keyword id="KW-0539">Nucleus</keyword>
<keyword id="KW-1185">Reference proteome</keyword>
<keyword id="KW-0690">Ribosome biogenesis</keyword>
<keyword id="KW-0694">RNA-binding</keyword>
<keyword id="KW-0698">rRNA processing</keyword>
<comment type="function">
    <text evidence="1">ATP-dependent RNA helicase required for 60S ribosomal subunit synthesis. Involved in efficient pre-rRNA processing, predominantly at site A3, which is necessary for the normal formation of 25S and 5.8S rRNAs (By similarity).</text>
</comment>
<comment type="catalytic activity">
    <reaction>
        <text>ATP + H2O = ADP + phosphate + H(+)</text>
        <dbReference type="Rhea" id="RHEA:13065"/>
        <dbReference type="ChEBI" id="CHEBI:15377"/>
        <dbReference type="ChEBI" id="CHEBI:15378"/>
        <dbReference type="ChEBI" id="CHEBI:30616"/>
        <dbReference type="ChEBI" id="CHEBI:43474"/>
        <dbReference type="ChEBI" id="CHEBI:456216"/>
        <dbReference type="EC" id="3.6.4.13"/>
    </reaction>
</comment>
<comment type="subcellular location">
    <subcellularLocation>
        <location evidence="1">Nucleus</location>
        <location evidence="1">Nucleolus</location>
    </subcellularLocation>
</comment>
<comment type="domain">
    <text>The Q motif is unique to and characteristic of the DEAD box family of RNA helicases and controls ATP binding and hydrolysis.</text>
</comment>
<comment type="similarity">
    <text evidence="5">Belongs to the DEAD box helicase family. DDX5/DBP2 subfamily.</text>
</comment>